<sequence length="264" mass="30665">MKPYLELIQKILDTGVERDDRTGTGTWSIFGHQMRFDLRQGFPLITTKKLHIRAIFIELLWFLRGETNVKYLHDHGVTIWDEWADEQGELGPIYGYQWRSWPLPDGGYLDQMAKTLTQIRNHPHSRRHVVVAYNPACVDEMALPPCHALFQFYVAQGRLSCQLYQRSADVFLGVPFNIASYALLTHLIAQQCDLDVGEFVWTGGDVHLYRNHLEPARLQLTREPLSLPHLRIKRRPPSLFEYQYDDLEIVDYQSYPAIKAAISV</sequence>
<protein>
    <recommendedName>
        <fullName evidence="1">Thymidylate synthase</fullName>
        <shortName evidence="1">TS</shortName>
        <shortName evidence="1">TSase</shortName>
        <ecNumber evidence="1">2.1.1.45</ecNumber>
    </recommendedName>
</protein>
<proteinExistence type="inferred from homology"/>
<evidence type="ECO:0000255" key="1">
    <source>
        <dbReference type="HAMAP-Rule" id="MF_00008"/>
    </source>
</evidence>
<gene>
    <name evidence="1" type="primary">thyA</name>
    <name type="ordered locus">Noc_0234</name>
</gene>
<comment type="function">
    <text evidence="1">Catalyzes the reductive methylation of 2'-deoxyuridine-5'-monophosphate (dUMP) to 2'-deoxythymidine-5'-monophosphate (dTMP) while utilizing 5,10-methylenetetrahydrofolate (mTHF) as the methyl donor and reductant in the reaction, yielding dihydrofolate (DHF) as a by-product. This enzymatic reaction provides an intracellular de novo source of dTMP, an essential precursor for DNA biosynthesis.</text>
</comment>
<comment type="catalytic activity">
    <reaction evidence="1">
        <text>dUMP + (6R)-5,10-methylene-5,6,7,8-tetrahydrofolate = 7,8-dihydrofolate + dTMP</text>
        <dbReference type="Rhea" id="RHEA:12104"/>
        <dbReference type="ChEBI" id="CHEBI:15636"/>
        <dbReference type="ChEBI" id="CHEBI:57451"/>
        <dbReference type="ChEBI" id="CHEBI:63528"/>
        <dbReference type="ChEBI" id="CHEBI:246422"/>
        <dbReference type="EC" id="2.1.1.45"/>
    </reaction>
</comment>
<comment type="pathway">
    <text evidence="1">Pyrimidine metabolism; dTTP biosynthesis.</text>
</comment>
<comment type="subunit">
    <text evidence="1">Homodimer.</text>
</comment>
<comment type="subcellular location">
    <subcellularLocation>
        <location evidence="1">Cytoplasm</location>
    </subcellularLocation>
</comment>
<comment type="similarity">
    <text evidence="1">Belongs to the thymidylate synthase family. Bacterial-type ThyA subfamily.</text>
</comment>
<reference key="1">
    <citation type="journal article" date="2006" name="Appl. Environ. Microbiol.">
        <title>Complete genome sequence of the marine, chemolithoautotrophic, ammonia-oxidizing bacterium Nitrosococcus oceani ATCC 19707.</title>
        <authorList>
            <person name="Klotz M.G."/>
            <person name="Arp D.J."/>
            <person name="Chain P.S.G."/>
            <person name="El-Sheikh A.F."/>
            <person name="Hauser L.J."/>
            <person name="Hommes N.G."/>
            <person name="Larimer F.W."/>
            <person name="Malfatti S.A."/>
            <person name="Norton J.M."/>
            <person name="Poret-Peterson A.T."/>
            <person name="Vergez L.M."/>
            <person name="Ward B.B."/>
        </authorList>
    </citation>
    <scope>NUCLEOTIDE SEQUENCE [LARGE SCALE GENOMIC DNA]</scope>
    <source>
        <strain>ATCC 19707 / BCRC 17464 / JCM 30415 / NCIMB 11848 / C-107</strain>
    </source>
</reference>
<keyword id="KW-0963">Cytoplasm</keyword>
<keyword id="KW-0489">Methyltransferase</keyword>
<keyword id="KW-0545">Nucleotide biosynthesis</keyword>
<keyword id="KW-1185">Reference proteome</keyword>
<keyword id="KW-0808">Transferase</keyword>
<dbReference type="EC" id="2.1.1.45" evidence="1"/>
<dbReference type="EMBL" id="CP000127">
    <property type="protein sequence ID" value="ABA56764.1"/>
    <property type="molecule type" value="Genomic_DNA"/>
</dbReference>
<dbReference type="RefSeq" id="WP_002813937.1">
    <property type="nucleotide sequence ID" value="NC_007484.1"/>
</dbReference>
<dbReference type="SMR" id="Q3JEI2"/>
<dbReference type="FunCoup" id="Q3JEI2">
    <property type="interactions" value="390"/>
</dbReference>
<dbReference type="STRING" id="323261.Noc_0234"/>
<dbReference type="KEGG" id="noc:Noc_0234"/>
<dbReference type="eggNOG" id="COG0207">
    <property type="taxonomic scope" value="Bacteria"/>
</dbReference>
<dbReference type="HOGENOM" id="CLU_021669_0_0_6"/>
<dbReference type="InParanoid" id="Q3JEI2"/>
<dbReference type="UniPathway" id="UPA00575"/>
<dbReference type="Proteomes" id="UP000006838">
    <property type="component" value="Chromosome"/>
</dbReference>
<dbReference type="GO" id="GO:0005829">
    <property type="term" value="C:cytosol"/>
    <property type="evidence" value="ECO:0007669"/>
    <property type="project" value="TreeGrafter"/>
</dbReference>
<dbReference type="GO" id="GO:0004799">
    <property type="term" value="F:thymidylate synthase activity"/>
    <property type="evidence" value="ECO:0007669"/>
    <property type="project" value="UniProtKB-UniRule"/>
</dbReference>
<dbReference type="GO" id="GO:0006231">
    <property type="term" value="P:dTMP biosynthetic process"/>
    <property type="evidence" value="ECO:0007669"/>
    <property type="project" value="UniProtKB-UniRule"/>
</dbReference>
<dbReference type="GO" id="GO:0006235">
    <property type="term" value="P:dTTP biosynthetic process"/>
    <property type="evidence" value="ECO:0007669"/>
    <property type="project" value="UniProtKB-UniRule"/>
</dbReference>
<dbReference type="GO" id="GO:0032259">
    <property type="term" value="P:methylation"/>
    <property type="evidence" value="ECO:0007669"/>
    <property type="project" value="UniProtKB-KW"/>
</dbReference>
<dbReference type="CDD" id="cd00351">
    <property type="entry name" value="TS_Pyrimidine_HMase"/>
    <property type="match status" value="1"/>
</dbReference>
<dbReference type="FunFam" id="3.30.572.10:FF:000013">
    <property type="entry name" value="Thymidylate synthase"/>
    <property type="match status" value="1"/>
</dbReference>
<dbReference type="Gene3D" id="3.30.572.10">
    <property type="entry name" value="Thymidylate synthase/dCMP hydroxymethylase domain"/>
    <property type="match status" value="1"/>
</dbReference>
<dbReference type="HAMAP" id="MF_00008">
    <property type="entry name" value="Thymidy_synth_bact"/>
    <property type="match status" value="1"/>
</dbReference>
<dbReference type="InterPro" id="IPR045097">
    <property type="entry name" value="Thymidate_synth/dCMP_Mease"/>
</dbReference>
<dbReference type="InterPro" id="IPR023451">
    <property type="entry name" value="Thymidate_synth/dCMP_Mease_dom"/>
</dbReference>
<dbReference type="InterPro" id="IPR036926">
    <property type="entry name" value="Thymidate_synth/dCMP_Mease_sf"/>
</dbReference>
<dbReference type="InterPro" id="IPR000398">
    <property type="entry name" value="Thymidylate_synthase"/>
</dbReference>
<dbReference type="InterPro" id="IPR020940">
    <property type="entry name" value="Thymidylate_synthase_AS"/>
</dbReference>
<dbReference type="NCBIfam" id="NF002497">
    <property type="entry name" value="PRK01827.1-3"/>
    <property type="match status" value="1"/>
</dbReference>
<dbReference type="NCBIfam" id="NF002499">
    <property type="entry name" value="PRK01827.1-5"/>
    <property type="match status" value="1"/>
</dbReference>
<dbReference type="NCBIfam" id="TIGR03284">
    <property type="entry name" value="thym_sym"/>
    <property type="match status" value="2"/>
</dbReference>
<dbReference type="PANTHER" id="PTHR11548:SF9">
    <property type="entry name" value="THYMIDYLATE SYNTHASE"/>
    <property type="match status" value="1"/>
</dbReference>
<dbReference type="PANTHER" id="PTHR11548">
    <property type="entry name" value="THYMIDYLATE SYNTHASE 1"/>
    <property type="match status" value="1"/>
</dbReference>
<dbReference type="Pfam" id="PF00303">
    <property type="entry name" value="Thymidylat_synt"/>
    <property type="match status" value="1"/>
</dbReference>
<dbReference type="PRINTS" id="PR00108">
    <property type="entry name" value="THYMDSNTHASE"/>
</dbReference>
<dbReference type="SUPFAM" id="SSF55831">
    <property type="entry name" value="Thymidylate synthase/dCMP hydroxymethylase"/>
    <property type="match status" value="1"/>
</dbReference>
<dbReference type="PROSITE" id="PS00091">
    <property type="entry name" value="THYMIDYLATE_SYNTHASE"/>
    <property type="match status" value="1"/>
</dbReference>
<feature type="chain" id="PRO_1000000641" description="Thymidylate synthase">
    <location>
        <begin position="1"/>
        <end position="264"/>
    </location>
</feature>
<feature type="active site" description="Nucleophile" evidence="1">
    <location>
        <position position="146"/>
    </location>
</feature>
<feature type="binding site" description="in other chain" evidence="1">
    <location>
        <position position="21"/>
    </location>
    <ligand>
        <name>dUMP</name>
        <dbReference type="ChEBI" id="CHEBI:246422"/>
        <note>ligand shared between dimeric partners</note>
    </ligand>
</feature>
<feature type="binding site" evidence="1">
    <location>
        <position position="51"/>
    </location>
    <ligand>
        <name>(6R)-5,10-methylene-5,6,7,8-tetrahydrofolate</name>
        <dbReference type="ChEBI" id="CHEBI:15636"/>
    </ligand>
</feature>
<feature type="binding site" evidence="1">
    <location>
        <begin position="126"/>
        <end position="127"/>
    </location>
    <ligand>
        <name>dUMP</name>
        <dbReference type="ChEBI" id="CHEBI:246422"/>
        <note>ligand shared between dimeric partners</note>
    </ligand>
</feature>
<feature type="binding site" description="in other chain" evidence="1">
    <location>
        <begin position="166"/>
        <end position="169"/>
    </location>
    <ligand>
        <name>dUMP</name>
        <dbReference type="ChEBI" id="CHEBI:246422"/>
        <note>ligand shared between dimeric partners</note>
    </ligand>
</feature>
<feature type="binding site" evidence="1">
    <location>
        <position position="169"/>
    </location>
    <ligand>
        <name>(6R)-5,10-methylene-5,6,7,8-tetrahydrofolate</name>
        <dbReference type="ChEBI" id="CHEBI:15636"/>
    </ligand>
</feature>
<feature type="binding site" description="in other chain" evidence="1">
    <location>
        <position position="177"/>
    </location>
    <ligand>
        <name>dUMP</name>
        <dbReference type="ChEBI" id="CHEBI:246422"/>
        <note>ligand shared between dimeric partners</note>
    </ligand>
</feature>
<feature type="binding site" description="in other chain" evidence="1">
    <location>
        <begin position="207"/>
        <end position="209"/>
    </location>
    <ligand>
        <name>dUMP</name>
        <dbReference type="ChEBI" id="CHEBI:246422"/>
        <note>ligand shared between dimeric partners</note>
    </ligand>
</feature>
<feature type="binding site" evidence="1">
    <location>
        <position position="263"/>
    </location>
    <ligand>
        <name>(6R)-5,10-methylene-5,6,7,8-tetrahydrofolate</name>
        <dbReference type="ChEBI" id="CHEBI:15636"/>
    </ligand>
</feature>
<organism>
    <name type="scientific">Nitrosococcus oceani (strain ATCC 19707 / BCRC 17464 / JCM 30415 / NCIMB 11848 / C-107)</name>
    <dbReference type="NCBI Taxonomy" id="323261"/>
    <lineage>
        <taxon>Bacteria</taxon>
        <taxon>Pseudomonadati</taxon>
        <taxon>Pseudomonadota</taxon>
        <taxon>Gammaproteobacteria</taxon>
        <taxon>Chromatiales</taxon>
        <taxon>Chromatiaceae</taxon>
        <taxon>Nitrosococcus</taxon>
    </lineage>
</organism>
<accession>Q3JEI2</accession>
<name>TYSY_NITOC</name>